<keyword id="KW-0002">3D-structure</keyword>
<keyword id="KW-0067">ATP-binding</keyword>
<keyword id="KW-0131">Cell cycle</keyword>
<keyword id="KW-0132">Cell division</keyword>
<keyword id="KW-0133">Cell shape</keyword>
<keyword id="KW-0961">Cell wall biogenesis/degradation</keyword>
<keyword id="KW-0963">Cytoplasm</keyword>
<keyword id="KW-0436">Ligase</keyword>
<keyword id="KW-0547">Nucleotide-binding</keyword>
<keyword id="KW-0573">Peptidoglycan synthesis</keyword>
<keyword id="KW-1185">Reference proteome</keyword>
<gene>
    <name evidence="1" type="primary">murD</name>
    <name type="ordered locus">TM_0234</name>
</gene>
<comment type="function">
    <text evidence="1">Cell wall formation. Catalyzes the addition of glutamate to the nucleotide precursor UDP-N-acetylmuramoyl-L-alanine (UMA).</text>
</comment>
<comment type="catalytic activity">
    <reaction evidence="1">
        <text>UDP-N-acetyl-alpha-D-muramoyl-L-alanine + D-glutamate + ATP = UDP-N-acetyl-alpha-D-muramoyl-L-alanyl-D-glutamate + ADP + phosphate + H(+)</text>
        <dbReference type="Rhea" id="RHEA:16429"/>
        <dbReference type="ChEBI" id="CHEBI:15378"/>
        <dbReference type="ChEBI" id="CHEBI:29986"/>
        <dbReference type="ChEBI" id="CHEBI:30616"/>
        <dbReference type="ChEBI" id="CHEBI:43474"/>
        <dbReference type="ChEBI" id="CHEBI:83898"/>
        <dbReference type="ChEBI" id="CHEBI:83900"/>
        <dbReference type="ChEBI" id="CHEBI:456216"/>
        <dbReference type="EC" id="6.3.2.9"/>
    </reaction>
</comment>
<comment type="pathway">
    <text evidence="1">Cell wall biogenesis; peptidoglycan biosynthesis.</text>
</comment>
<comment type="subcellular location">
    <subcellularLocation>
        <location evidence="1">Cytoplasm</location>
    </subcellularLocation>
</comment>
<comment type="similarity">
    <text evidence="1">Belongs to the MurCDEF family.</text>
</comment>
<organism>
    <name type="scientific">Thermotoga maritima (strain ATCC 43589 / DSM 3109 / JCM 10099 / NBRC 100826 / MSB8)</name>
    <dbReference type="NCBI Taxonomy" id="243274"/>
    <lineage>
        <taxon>Bacteria</taxon>
        <taxon>Thermotogati</taxon>
        <taxon>Thermotogota</taxon>
        <taxon>Thermotogae</taxon>
        <taxon>Thermotogales</taxon>
        <taxon>Thermotogaceae</taxon>
        <taxon>Thermotoga</taxon>
    </lineage>
</organism>
<dbReference type="EC" id="6.3.2.9" evidence="1"/>
<dbReference type="EMBL" id="AE000512">
    <property type="protein sequence ID" value="AAD35325.1"/>
    <property type="molecule type" value="Genomic_DNA"/>
</dbReference>
<dbReference type="PIR" id="D72402">
    <property type="entry name" value="D72402"/>
</dbReference>
<dbReference type="RefSeq" id="NP_228048.1">
    <property type="nucleotide sequence ID" value="NC_000853.1"/>
</dbReference>
<dbReference type="RefSeq" id="WP_004082930.1">
    <property type="nucleotide sequence ID" value="NC_000853.1"/>
</dbReference>
<dbReference type="PDB" id="4BUC">
    <property type="method" value="X-ray"/>
    <property type="resolution" value="2.17 A"/>
    <property type="chains" value="A/B=1-430"/>
</dbReference>
<dbReference type="PDBsum" id="4BUC"/>
<dbReference type="SMR" id="Q9WY76"/>
<dbReference type="FunCoup" id="Q9WY76">
    <property type="interactions" value="317"/>
</dbReference>
<dbReference type="STRING" id="243274.TM_0234"/>
<dbReference type="PaxDb" id="243274-THEMA_03555"/>
<dbReference type="EnsemblBacteria" id="AAD35325">
    <property type="protein sequence ID" value="AAD35325"/>
    <property type="gene ID" value="TM_0234"/>
</dbReference>
<dbReference type="KEGG" id="tma:TM0234"/>
<dbReference type="KEGG" id="tmi:THEMA_03555"/>
<dbReference type="KEGG" id="tmm:Tmari_0232"/>
<dbReference type="KEGG" id="tmw:THMA_0241"/>
<dbReference type="eggNOG" id="COG0771">
    <property type="taxonomic scope" value="Bacteria"/>
</dbReference>
<dbReference type="InParanoid" id="Q9WY76"/>
<dbReference type="OrthoDB" id="9809796at2"/>
<dbReference type="UniPathway" id="UPA00219"/>
<dbReference type="EvolutionaryTrace" id="Q9WY76"/>
<dbReference type="Proteomes" id="UP000008183">
    <property type="component" value="Chromosome"/>
</dbReference>
<dbReference type="GO" id="GO:0005737">
    <property type="term" value="C:cytoplasm"/>
    <property type="evidence" value="ECO:0007669"/>
    <property type="project" value="UniProtKB-SubCell"/>
</dbReference>
<dbReference type="GO" id="GO:0005524">
    <property type="term" value="F:ATP binding"/>
    <property type="evidence" value="ECO:0007669"/>
    <property type="project" value="UniProtKB-UniRule"/>
</dbReference>
<dbReference type="GO" id="GO:0008764">
    <property type="term" value="F:UDP-N-acetylmuramoylalanine-D-glutamate ligase activity"/>
    <property type="evidence" value="ECO:0007669"/>
    <property type="project" value="UniProtKB-UniRule"/>
</dbReference>
<dbReference type="GO" id="GO:0051301">
    <property type="term" value="P:cell division"/>
    <property type="evidence" value="ECO:0007669"/>
    <property type="project" value="UniProtKB-KW"/>
</dbReference>
<dbReference type="GO" id="GO:0071555">
    <property type="term" value="P:cell wall organization"/>
    <property type="evidence" value="ECO:0007669"/>
    <property type="project" value="UniProtKB-KW"/>
</dbReference>
<dbReference type="GO" id="GO:0009252">
    <property type="term" value="P:peptidoglycan biosynthetic process"/>
    <property type="evidence" value="ECO:0007669"/>
    <property type="project" value="UniProtKB-UniRule"/>
</dbReference>
<dbReference type="GO" id="GO:0008360">
    <property type="term" value="P:regulation of cell shape"/>
    <property type="evidence" value="ECO:0007669"/>
    <property type="project" value="UniProtKB-KW"/>
</dbReference>
<dbReference type="Gene3D" id="3.90.190.20">
    <property type="entry name" value="Mur ligase, C-terminal domain"/>
    <property type="match status" value="1"/>
</dbReference>
<dbReference type="Gene3D" id="3.40.1190.10">
    <property type="entry name" value="Mur-like, catalytic domain"/>
    <property type="match status" value="1"/>
</dbReference>
<dbReference type="Gene3D" id="3.40.50.720">
    <property type="entry name" value="NAD(P)-binding Rossmann-like Domain"/>
    <property type="match status" value="1"/>
</dbReference>
<dbReference type="HAMAP" id="MF_00639">
    <property type="entry name" value="MurD"/>
    <property type="match status" value="1"/>
</dbReference>
<dbReference type="InterPro" id="IPR036565">
    <property type="entry name" value="Mur-like_cat_sf"/>
</dbReference>
<dbReference type="InterPro" id="IPR004101">
    <property type="entry name" value="Mur_ligase_C"/>
</dbReference>
<dbReference type="InterPro" id="IPR036615">
    <property type="entry name" value="Mur_ligase_C_dom_sf"/>
</dbReference>
<dbReference type="InterPro" id="IPR013221">
    <property type="entry name" value="Mur_ligase_cen"/>
</dbReference>
<dbReference type="InterPro" id="IPR005762">
    <property type="entry name" value="MurD"/>
</dbReference>
<dbReference type="NCBIfam" id="TIGR01087">
    <property type="entry name" value="murD"/>
    <property type="match status" value="1"/>
</dbReference>
<dbReference type="PANTHER" id="PTHR43692">
    <property type="entry name" value="UDP-N-ACETYLMURAMOYLALANINE--D-GLUTAMATE LIGASE"/>
    <property type="match status" value="1"/>
</dbReference>
<dbReference type="PANTHER" id="PTHR43692:SF1">
    <property type="entry name" value="UDP-N-ACETYLMURAMOYLALANINE--D-GLUTAMATE LIGASE"/>
    <property type="match status" value="1"/>
</dbReference>
<dbReference type="Pfam" id="PF02875">
    <property type="entry name" value="Mur_ligase_C"/>
    <property type="match status" value="1"/>
</dbReference>
<dbReference type="Pfam" id="PF08245">
    <property type="entry name" value="Mur_ligase_M"/>
    <property type="match status" value="1"/>
</dbReference>
<dbReference type="Pfam" id="PF21799">
    <property type="entry name" value="MurD-like_N"/>
    <property type="match status" value="1"/>
</dbReference>
<dbReference type="Pfam" id="PF21377">
    <property type="entry name" value="MurD_N"/>
    <property type="match status" value="1"/>
</dbReference>
<dbReference type="SUPFAM" id="SSF51984">
    <property type="entry name" value="MurCD N-terminal domain"/>
    <property type="match status" value="1"/>
</dbReference>
<dbReference type="SUPFAM" id="SSF53623">
    <property type="entry name" value="MurD-like peptide ligases, catalytic domain"/>
    <property type="match status" value="1"/>
</dbReference>
<dbReference type="SUPFAM" id="SSF53244">
    <property type="entry name" value="MurD-like peptide ligases, peptide-binding domain"/>
    <property type="match status" value="1"/>
</dbReference>
<reference key="1">
    <citation type="journal article" date="1999" name="Nature">
        <title>Evidence for lateral gene transfer between Archaea and Bacteria from genome sequence of Thermotoga maritima.</title>
        <authorList>
            <person name="Nelson K.E."/>
            <person name="Clayton R.A."/>
            <person name="Gill S.R."/>
            <person name="Gwinn M.L."/>
            <person name="Dodson R.J."/>
            <person name="Haft D.H."/>
            <person name="Hickey E.K."/>
            <person name="Peterson J.D."/>
            <person name="Nelson W.C."/>
            <person name="Ketchum K.A."/>
            <person name="McDonald L.A."/>
            <person name="Utterback T.R."/>
            <person name="Malek J.A."/>
            <person name="Linher K.D."/>
            <person name="Garrett M.M."/>
            <person name="Stewart A.M."/>
            <person name="Cotton M.D."/>
            <person name="Pratt M.S."/>
            <person name="Phillips C.A."/>
            <person name="Richardson D.L."/>
            <person name="Heidelberg J.F."/>
            <person name="Sutton G.G."/>
            <person name="Fleischmann R.D."/>
            <person name="Eisen J.A."/>
            <person name="White O."/>
            <person name="Salzberg S.L."/>
            <person name="Smith H.O."/>
            <person name="Venter J.C."/>
            <person name="Fraser C.M."/>
        </authorList>
    </citation>
    <scope>NUCLEOTIDE SEQUENCE [LARGE SCALE GENOMIC DNA]</scope>
    <source>
        <strain>ATCC 43589 / DSM 3109 / JCM 10099 / NBRC 100826 / MSB8</strain>
    </source>
</reference>
<evidence type="ECO:0000255" key="1">
    <source>
        <dbReference type="HAMAP-Rule" id="MF_00639"/>
    </source>
</evidence>
<evidence type="ECO:0007829" key="2">
    <source>
        <dbReference type="PDB" id="4BUC"/>
    </source>
</evidence>
<protein>
    <recommendedName>
        <fullName evidence="1">UDP-N-acetylmuramoylalanine--D-glutamate ligase</fullName>
        <ecNumber evidence="1">6.3.2.9</ecNumber>
    </recommendedName>
    <alternativeName>
        <fullName evidence="1">D-glutamic acid-adding enzyme</fullName>
    </alternativeName>
    <alternativeName>
        <fullName evidence="1">UDP-N-acetylmuramoyl-L-alanyl-D-glutamate synthetase</fullName>
    </alternativeName>
</protein>
<proteinExistence type="evidence at protein level"/>
<feature type="chain" id="PRO_0000109113" description="UDP-N-acetylmuramoylalanine--D-glutamate ligase">
    <location>
        <begin position="1"/>
        <end position="430"/>
    </location>
</feature>
<feature type="binding site" evidence="1">
    <location>
        <begin position="109"/>
        <end position="115"/>
    </location>
    <ligand>
        <name>ATP</name>
        <dbReference type="ChEBI" id="CHEBI:30616"/>
    </ligand>
</feature>
<feature type="strand" evidence="2">
    <location>
        <begin position="2"/>
        <end position="7"/>
    </location>
</feature>
<feature type="helix" evidence="2">
    <location>
        <begin position="10"/>
        <end position="20"/>
    </location>
</feature>
<feature type="strand" evidence="2">
    <location>
        <begin position="25"/>
        <end position="30"/>
    </location>
</feature>
<feature type="helix" evidence="2">
    <location>
        <begin position="37"/>
        <end position="45"/>
    </location>
</feature>
<feature type="strand" evidence="2">
    <location>
        <begin position="49"/>
        <end position="51"/>
    </location>
</feature>
<feature type="helix" evidence="2">
    <location>
        <begin position="57"/>
        <end position="61"/>
    </location>
</feature>
<feature type="strand" evidence="2">
    <location>
        <begin position="63"/>
        <end position="67"/>
    </location>
</feature>
<feature type="helix" evidence="2">
    <location>
        <begin position="76"/>
        <end position="83"/>
    </location>
</feature>
<feature type="strand" evidence="2">
    <location>
        <begin position="87"/>
        <end position="89"/>
    </location>
</feature>
<feature type="helix" evidence="2">
    <location>
        <begin position="91"/>
        <end position="98"/>
    </location>
</feature>
<feature type="helix" evidence="2">
    <location>
        <begin position="101"/>
        <end position="103"/>
    </location>
</feature>
<feature type="strand" evidence="2">
    <location>
        <begin position="104"/>
        <end position="108"/>
    </location>
</feature>
<feature type="strand" evidence="2">
    <location>
        <begin position="110"/>
        <end position="112"/>
    </location>
</feature>
<feature type="helix" evidence="2">
    <location>
        <begin position="113"/>
        <end position="126"/>
    </location>
</feature>
<feature type="strand" evidence="2">
    <location>
        <begin position="131"/>
        <end position="135"/>
    </location>
</feature>
<feature type="helix" evidence="2">
    <location>
        <begin position="141"/>
        <end position="145"/>
    </location>
</feature>
<feature type="strand" evidence="2">
    <location>
        <begin position="150"/>
        <end position="155"/>
    </location>
</feature>
<feature type="helix" evidence="2">
    <location>
        <begin position="158"/>
        <end position="162"/>
    </location>
</feature>
<feature type="strand" evidence="2">
    <location>
        <begin position="170"/>
        <end position="174"/>
    </location>
</feature>
<feature type="strand" evidence="2">
    <location>
        <begin position="179"/>
        <end position="181"/>
    </location>
</feature>
<feature type="helix" evidence="2">
    <location>
        <begin position="188"/>
        <end position="201"/>
    </location>
</feature>
<feature type="strand" evidence="2">
    <location>
        <begin position="206"/>
        <end position="211"/>
    </location>
</feature>
<feature type="helix" evidence="2">
    <location>
        <begin position="212"/>
        <end position="216"/>
    </location>
</feature>
<feature type="strand" evidence="2">
    <location>
        <begin position="225"/>
        <end position="237"/>
    </location>
</feature>
<feature type="strand" evidence="2">
    <location>
        <begin position="239"/>
        <end position="244"/>
    </location>
</feature>
<feature type="strand" evidence="2">
    <location>
        <begin position="247"/>
        <end position="250"/>
    </location>
</feature>
<feature type="helix" evidence="2">
    <location>
        <begin position="257"/>
        <end position="274"/>
    </location>
</feature>
<feature type="helix" evidence="2">
    <location>
        <begin position="278"/>
        <end position="284"/>
    </location>
</feature>
<feature type="strand" evidence="2">
    <location>
        <begin position="295"/>
        <end position="300"/>
    </location>
</feature>
<feature type="strand" evidence="2">
    <location>
        <begin position="303"/>
        <end position="307"/>
    </location>
</feature>
<feature type="helix" evidence="2">
    <location>
        <begin position="314"/>
        <end position="321"/>
    </location>
</feature>
<feature type="strand" evidence="2">
    <location>
        <begin position="325"/>
        <end position="334"/>
    </location>
</feature>
<feature type="helix" evidence="2">
    <location>
        <begin position="340"/>
        <end position="347"/>
    </location>
</feature>
<feature type="helix" evidence="2">
    <location>
        <begin position="348"/>
        <end position="350"/>
    </location>
</feature>
<feature type="strand" evidence="2">
    <location>
        <begin position="351"/>
        <end position="358"/>
    </location>
</feature>
<feature type="helix" evidence="2">
    <location>
        <begin position="360"/>
        <end position="364"/>
    </location>
</feature>
<feature type="helix" evidence="2">
    <location>
        <begin position="365"/>
        <end position="367"/>
    </location>
</feature>
<feature type="strand" evidence="2">
    <location>
        <begin position="373"/>
        <end position="375"/>
    </location>
</feature>
<feature type="helix" evidence="2">
    <location>
        <begin position="379"/>
        <end position="389"/>
    </location>
</feature>
<feature type="strand" evidence="2">
    <location>
        <begin position="395"/>
        <end position="403"/>
    </location>
</feature>
<feature type="helix" evidence="2">
    <location>
        <begin position="414"/>
        <end position="424"/>
    </location>
</feature>
<name>MURD_THEMA</name>
<sequence>MKIGFLGFGKSNRSLLKYLLNHQEAKFFVSEAKTLDGETKKFLEEHSVEYEEGGHTEKLLDCDVVYVSPGIKPDTSMIELLSSRGVKLSTELQFFLDNVDPKKVVGITGTDGKSTATALMYHVLSGRGFKTFLGGNFGTPAVEALEGEYDYYVLEMSSFQLFWSERPYLSNFLVLNISEDHLDWHSSFKEYVDSKLKPAFLQTEGDLFVYNKHIERLRNLEGVRSRKIPFWTDENFATEKELIVRGKKYTLPGNYPYQMRENILAVSVLYMEMFNELESFLELLRDFKPLPHRMEYLGQIDGRHFYNDSKATSTHAVLGALSNFDKVVLIMCGIGKKENYSLFVEKASPKLKHLIMFGEISKELAPFVGKIPHSIVENMEEAFEKAMEVSEKGDVILLSPGGASFDMYENYAKRGEHFREIFKRHGGDEV</sequence>
<accession>Q9WY76</accession>